<sequence>MQQDSHTHGIDMSALGRNKQGLQLAEETVAIEVPGLSLFYGDKQALFDVSMNIPKQRVTAFIGPSGCGKSTLLRTFNRMNDLVDGCRVEGAINLYGNNIYRKGEDVAELRRRVGMVFQKPNPFPKTIYENVVYGLRIQGINKKRVLDEAVEWALKGAALWDEVKDRLHESALGLSGGQQQRLVIARTIAVEPEVLLLDEPCSALDPISTLKVEELIYELKSKYTIVIVTHNMQQAARVSDYTAFMYLGKLVEFGDTDTLFTNPAKKQTEDYITGRYG</sequence>
<reference key="1">
    <citation type="journal article" date="1999" name="J. Biosci. Bioeng.">
        <title>Cloning and characterization of Pseudomonas putida genes encoding the phosphate-specific transport system.</title>
        <authorList>
            <person name="Wu H."/>
            <person name="Kosaka H."/>
            <person name="Kato J."/>
            <person name="Kuroda A."/>
            <person name="Ikeda T."/>
            <person name="Takiguchi N."/>
            <person name="Ohtake H."/>
        </authorList>
    </citation>
    <scope>NUCLEOTIDE SEQUENCE [GENOMIC DNA]</scope>
    <source>
        <strain>PRS2000</strain>
    </source>
</reference>
<feature type="chain" id="PRO_0000092864" description="Phosphate import ATP-binding protein PstB">
    <location>
        <begin position="1"/>
        <end position="277"/>
    </location>
</feature>
<feature type="domain" description="ABC transporter" evidence="1">
    <location>
        <begin position="31"/>
        <end position="272"/>
    </location>
</feature>
<feature type="binding site" evidence="1">
    <location>
        <begin position="63"/>
        <end position="70"/>
    </location>
    <ligand>
        <name>ATP</name>
        <dbReference type="ChEBI" id="CHEBI:30616"/>
    </ligand>
</feature>
<gene>
    <name evidence="1" type="primary">pstB</name>
</gene>
<protein>
    <recommendedName>
        <fullName evidence="1">Phosphate import ATP-binding protein PstB</fullName>
        <ecNumber evidence="1">7.3.2.1</ecNumber>
    </recommendedName>
    <alternativeName>
        <fullName evidence="1">ABC phosphate transporter</fullName>
    </alternativeName>
    <alternativeName>
        <fullName evidence="1">Phosphate-transporting ATPase</fullName>
    </alternativeName>
</protein>
<accession>Q9Z411</accession>
<comment type="function">
    <text evidence="1">Part of the ABC transporter complex PstSACB involved in phosphate import. Responsible for energy coupling to the transport system.</text>
</comment>
<comment type="catalytic activity">
    <reaction evidence="1">
        <text>phosphate(out) + ATP + H2O = ADP + 2 phosphate(in) + H(+)</text>
        <dbReference type="Rhea" id="RHEA:24440"/>
        <dbReference type="ChEBI" id="CHEBI:15377"/>
        <dbReference type="ChEBI" id="CHEBI:15378"/>
        <dbReference type="ChEBI" id="CHEBI:30616"/>
        <dbReference type="ChEBI" id="CHEBI:43474"/>
        <dbReference type="ChEBI" id="CHEBI:456216"/>
        <dbReference type="EC" id="7.3.2.1"/>
    </reaction>
</comment>
<comment type="subunit">
    <text evidence="1">The complex is composed of two ATP-binding proteins (PstB), two transmembrane proteins (PstC and PstA) and a solute-binding protein (PstS).</text>
</comment>
<comment type="subcellular location">
    <subcellularLocation>
        <location evidence="1">Cell inner membrane</location>
        <topology evidence="1">Peripheral membrane protein</topology>
    </subcellularLocation>
</comment>
<comment type="similarity">
    <text evidence="1">Belongs to the ABC transporter superfamily. Phosphate importer (TC 3.A.1.7) family.</text>
</comment>
<proteinExistence type="inferred from homology"/>
<keyword id="KW-0067">ATP-binding</keyword>
<keyword id="KW-0997">Cell inner membrane</keyword>
<keyword id="KW-1003">Cell membrane</keyword>
<keyword id="KW-0472">Membrane</keyword>
<keyword id="KW-0547">Nucleotide-binding</keyword>
<keyword id="KW-0592">Phosphate transport</keyword>
<keyword id="KW-1278">Translocase</keyword>
<keyword id="KW-0813">Transport</keyword>
<evidence type="ECO:0000255" key="1">
    <source>
        <dbReference type="HAMAP-Rule" id="MF_01702"/>
    </source>
</evidence>
<organism>
    <name type="scientific">Pseudomonas putida</name>
    <name type="common">Arthrobacter siderocapsulatus</name>
    <dbReference type="NCBI Taxonomy" id="303"/>
    <lineage>
        <taxon>Bacteria</taxon>
        <taxon>Pseudomonadati</taxon>
        <taxon>Pseudomonadota</taxon>
        <taxon>Gammaproteobacteria</taxon>
        <taxon>Pseudomonadales</taxon>
        <taxon>Pseudomonadaceae</taxon>
        <taxon>Pseudomonas</taxon>
    </lineage>
</organism>
<name>PSTB_PSEPU</name>
<dbReference type="EC" id="7.3.2.1" evidence="1"/>
<dbReference type="EMBL" id="AB017356">
    <property type="protein sequence ID" value="BAA75657.1"/>
    <property type="molecule type" value="Genomic_DNA"/>
</dbReference>
<dbReference type="PIR" id="T43868">
    <property type="entry name" value="T43868"/>
</dbReference>
<dbReference type="SMR" id="Q9Z411"/>
<dbReference type="eggNOG" id="COG1117">
    <property type="taxonomic scope" value="Bacteria"/>
</dbReference>
<dbReference type="GO" id="GO:0005886">
    <property type="term" value="C:plasma membrane"/>
    <property type="evidence" value="ECO:0007669"/>
    <property type="project" value="UniProtKB-SubCell"/>
</dbReference>
<dbReference type="GO" id="GO:0005524">
    <property type="term" value="F:ATP binding"/>
    <property type="evidence" value="ECO:0007669"/>
    <property type="project" value="UniProtKB-KW"/>
</dbReference>
<dbReference type="GO" id="GO:0016887">
    <property type="term" value="F:ATP hydrolysis activity"/>
    <property type="evidence" value="ECO:0007669"/>
    <property type="project" value="InterPro"/>
</dbReference>
<dbReference type="GO" id="GO:0015415">
    <property type="term" value="F:ATPase-coupled phosphate ion transmembrane transporter activity"/>
    <property type="evidence" value="ECO:0007669"/>
    <property type="project" value="UniProtKB-EC"/>
</dbReference>
<dbReference type="GO" id="GO:0035435">
    <property type="term" value="P:phosphate ion transmembrane transport"/>
    <property type="evidence" value="ECO:0007669"/>
    <property type="project" value="InterPro"/>
</dbReference>
<dbReference type="CDD" id="cd03260">
    <property type="entry name" value="ABC_PstB_phosphate_transporter"/>
    <property type="match status" value="1"/>
</dbReference>
<dbReference type="FunFam" id="3.40.50.300:FF:000132">
    <property type="entry name" value="Phosphate import ATP-binding protein PstB"/>
    <property type="match status" value="1"/>
</dbReference>
<dbReference type="Gene3D" id="3.40.50.300">
    <property type="entry name" value="P-loop containing nucleotide triphosphate hydrolases"/>
    <property type="match status" value="1"/>
</dbReference>
<dbReference type="InterPro" id="IPR003593">
    <property type="entry name" value="AAA+_ATPase"/>
</dbReference>
<dbReference type="InterPro" id="IPR003439">
    <property type="entry name" value="ABC_transporter-like_ATP-bd"/>
</dbReference>
<dbReference type="InterPro" id="IPR017871">
    <property type="entry name" value="ABC_transporter-like_CS"/>
</dbReference>
<dbReference type="InterPro" id="IPR027417">
    <property type="entry name" value="P-loop_NTPase"/>
</dbReference>
<dbReference type="InterPro" id="IPR005670">
    <property type="entry name" value="PstB-like"/>
</dbReference>
<dbReference type="NCBIfam" id="TIGR00972">
    <property type="entry name" value="3a0107s01c2"/>
    <property type="match status" value="1"/>
</dbReference>
<dbReference type="PANTHER" id="PTHR43423">
    <property type="entry name" value="ABC TRANSPORTER I FAMILY MEMBER 17"/>
    <property type="match status" value="1"/>
</dbReference>
<dbReference type="PANTHER" id="PTHR43423:SF12">
    <property type="entry name" value="IRON EXPORT ATP-BINDING PROTEIN FETA-RELATED"/>
    <property type="match status" value="1"/>
</dbReference>
<dbReference type="Pfam" id="PF00005">
    <property type="entry name" value="ABC_tran"/>
    <property type="match status" value="1"/>
</dbReference>
<dbReference type="SMART" id="SM00382">
    <property type="entry name" value="AAA"/>
    <property type="match status" value="1"/>
</dbReference>
<dbReference type="SUPFAM" id="SSF52540">
    <property type="entry name" value="P-loop containing nucleoside triphosphate hydrolases"/>
    <property type="match status" value="1"/>
</dbReference>
<dbReference type="PROSITE" id="PS00211">
    <property type="entry name" value="ABC_TRANSPORTER_1"/>
    <property type="match status" value="1"/>
</dbReference>
<dbReference type="PROSITE" id="PS50893">
    <property type="entry name" value="ABC_TRANSPORTER_2"/>
    <property type="match status" value="1"/>
</dbReference>
<dbReference type="PROSITE" id="PS51238">
    <property type="entry name" value="PSTB"/>
    <property type="match status" value="1"/>
</dbReference>